<proteinExistence type="inferred from homology"/>
<reference key="1">
    <citation type="journal article" date="2002" name="Nat. Biotechnol.">
        <title>Genome sequence of the dissimilatory metal ion-reducing bacterium Shewanella oneidensis.</title>
        <authorList>
            <person name="Heidelberg J.F."/>
            <person name="Paulsen I.T."/>
            <person name="Nelson K.E."/>
            <person name="Gaidos E.J."/>
            <person name="Nelson W.C."/>
            <person name="Read T.D."/>
            <person name="Eisen J.A."/>
            <person name="Seshadri R."/>
            <person name="Ward N.L."/>
            <person name="Methe B.A."/>
            <person name="Clayton R.A."/>
            <person name="Meyer T."/>
            <person name="Tsapin A."/>
            <person name="Scott J."/>
            <person name="Beanan M.J."/>
            <person name="Brinkac L.M."/>
            <person name="Daugherty S.C."/>
            <person name="DeBoy R.T."/>
            <person name="Dodson R.J."/>
            <person name="Durkin A.S."/>
            <person name="Haft D.H."/>
            <person name="Kolonay J.F."/>
            <person name="Madupu R."/>
            <person name="Peterson J.D."/>
            <person name="Umayam L.A."/>
            <person name="White O."/>
            <person name="Wolf A.M."/>
            <person name="Vamathevan J.J."/>
            <person name="Weidman J.F."/>
            <person name="Impraim M."/>
            <person name="Lee K."/>
            <person name="Berry K.J."/>
            <person name="Lee C."/>
            <person name="Mueller J."/>
            <person name="Khouri H.M."/>
            <person name="Gill J."/>
            <person name="Utterback T.R."/>
            <person name="McDonald L.A."/>
            <person name="Feldblyum T.V."/>
            <person name="Smith H.O."/>
            <person name="Venter J.C."/>
            <person name="Nealson K.H."/>
            <person name="Fraser C.M."/>
        </authorList>
    </citation>
    <scope>NUCLEOTIDE SEQUENCE [LARGE SCALE GENOMIC DNA]</scope>
    <source>
        <strain>ATCC 700550 / JCM 31522 / CIP 106686 / LMG 19005 / NCIMB 14063 / MR-1</strain>
    </source>
</reference>
<organism>
    <name type="scientific">Shewanella oneidensis (strain ATCC 700550 / JCM 31522 / CIP 106686 / LMG 19005 / NCIMB 14063 / MR-1)</name>
    <dbReference type="NCBI Taxonomy" id="211586"/>
    <lineage>
        <taxon>Bacteria</taxon>
        <taxon>Pseudomonadati</taxon>
        <taxon>Pseudomonadota</taxon>
        <taxon>Gammaproteobacteria</taxon>
        <taxon>Alteromonadales</taxon>
        <taxon>Shewanellaceae</taxon>
        <taxon>Shewanella</taxon>
    </lineage>
</organism>
<sequence length="260" mass="26957">MSTNNSVLVLKVGGALLQCEMGMARLMDTAAAMIANGQQVLMVHGGGCLVDEQLAANGMETVKLEGLRVTPPEQMPIIAGALAGTSNKILQGAATKAGIVSVGMCLADGNTVSAKIKDERLGLVGEVYPKDATYLKFILSQGWMPICSSIAMMDDGQMLNVNADQAATVLAKLVGGKLVLLSDVSGVLDGKGQLIPSLNGQQIADLVKQGVIEKGMKVKVEAALEVAQWMGQAVQVASWRDASQLVALAKGEAVGTQIQP</sequence>
<accession>P59301</accession>
<comment type="function">
    <text evidence="1">Catalyzes the ATP-dependent phosphorylation of N-acetyl-L-glutamate.</text>
</comment>
<comment type="catalytic activity">
    <reaction evidence="1">
        <text>N-acetyl-L-glutamate + ATP = N-acetyl-L-glutamyl 5-phosphate + ADP</text>
        <dbReference type="Rhea" id="RHEA:14629"/>
        <dbReference type="ChEBI" id="CHEBI:30616"/>
        <dbReference type="ChEBI" id="CHEBI:44337"/>
        <dbReference type="ChEBI" id="CHEBI:57936"/>
        <dbReference type="ChEBI" id="CHEBI:456216"/>
        <dbReference type="EC" id="2.7.2.8"/>
    </reaction>
</comment>
<comment type="pathway">
    <text evidence="1">Amino-acid biosynthesis; L-arginine biosynthesis; N(2)-acetyl-L-ornithine from L-glutamate: step 2/4.</text>
</comment>
<comment type="subcellular location">
    <subcellularLocation>
        <location evidence="1">Cytoplasm</location>
    </subcellularLocation>
</comment>
<comment type="similarity">
    <text evidence="1">Belongs to the acetylglutamate kinase family. ArgB subfamily.</text>
</comment>
<evidence type="ECO:0000255" key="1">
    <source>
        <dbReference type="HAMAP-Rule" id="MF_00082"/>
    </source>
</evidence>
<feature type="chain" id="PRO_0000112660" description="Acetylglutamate kinase">
    <location>
        <begin position="1"/>
        <end position="260"/>
    </location>
</feature>
<feature type="binding site" evidence="1">
    <location>
        <begin position="46"/>
        <end position="47"/>
    </location>
    <ligand>
        <name>substrate</name>
    </ligand>
</feature>
<feature type="binding site" evidence="1">
    <location>
        <position position="68"/>
    </location>
    <ligand>
        <name>substrate</name>
    </ligand>
</feature>
<feature type="binding site" evidence="1">
    <location>
        <position position="160"/>
    </location>
    <ligand>
        <name>substrate</name>
    </ligand>
</feature>
<feature type="site" description="Transition state stabilizer" evidence="1">
    <location>
        <position position="11"/>
    </location>
</feature>
<feature type="site" description="Transition state stabilizer" evidence="1">
    <location>
        <position position="219"/>
    </location>
</feature>
<dbReference type="EC" id="2.7.2.8" evidence="1"/>
<dbReference type="EMBL" id="AE014299">
    <property type="protein sequence ID" value="AAN53361.1"/>
    <property type="molecule type" value="Genomic_DNA"/>
</dbReference>
<dbReference type="RefSeq" id="NP_715916.1">
    <property type="nucleotide sequence ID" value="NC_004347.2"/>
</dbReference>
<dbReference type="RefSeq" id="WP_011070648.1">
    <property type="nucleotide sequence ID" value="NC_004347.2"/>
</dbReference>
<dbReference type="SMR" id="P59301"/>
<dbReference type="STRING" id="211586.SO_0276"/>
<dbReference type="PaxDb" id="211586-SO_0276"/>
<dbReference type="KEGG" id="son:SO_0276"/>
<dbReference type="PATRIC" id="fig|211586.12.peg.267"/>
<dbReference type="eggNOG" id="COG0548">
    <property type="taxonomic scope" value="Bacteria"/>
</dbReference>
<dbReference type="HOGENOM" id="CLU_053680_1_1_6"/>
<dbReference type="OrthoDB" id="5915023at2"/>
<dbReference type="PhylomeDB" id="P59301"/>
<dbReference type="BioCyc" id="SONE211586:G1GMP-266-MONOMER"/>
<dbReference type="UniPathway" id="UPA00068">
    <property type="reaction ID" value="UER00107"/>
</dbReference>
<dbReference type="Proteomes" id="UP000008186">
    <property type="component" value="Chromosome"/>
</dbReference>
<dbReference type="GO" id="GO:0005737">
    <property type="term" value="C:cytoplasm"/>
    <property type="evidence" value="ECO:0007669"/>
    <property type="project" value="UniProtKB-SubCell"/>
</dbReference>
<dbReference type="GO" id="GO:0003991">
    <property type="term" value="F:acetylglutamate kinase activity"/>
    <property type="evidence" value="ECO:0000318"/>
    <property type="project" value="GO_Central"/>
</dbReference>
<dbReference type="GO" id="GO:0005524">
    <property type="term" value="F:ATP binding"/>
    <property type="evidence" value="ECO:0007669"/>
    <property type="project" value="UniProtKB-UniRule"/>
</dbReference>
<dbReference type="GO" id="GO:0042450">
    <property type="term" value="P:arginine biosynthetic process via ornithine"/>
    <property type="evidence" value="ECO:0007669"/>
    <property type="project" value="UniProtKB-UniRule"/>
</dbReference>
<dbReference type="GO" id="GO:0006526">
    <property type="term" value="P:L-arginine biosynthetic process"/>
    <property type="evidence" value="ECO:0000318"/>
    <property type="project" value="GO_Central"/>
</dbReference>
<dbReference type="FunFam" id="3.40.1160.10:FF:000008">
    <property type="entry name" value="Acetylglutamate kinase"/>
    <property type="match status" value="1"/>
</dbReference>
<dbReference type="Gene3D" id="3.40.1160.10">
    <property type="entry name" value="Acetylglutamate kinase-like"/>
    <property type="match status" value="1"/>
</dbReference>
<dbReference type="HAMAP" id="MF_00082">
    <property type="entry name" value="ArgB"/>
    <property type="match status" value="1"/>
</dbReference>
<dbReference type="InterPro" id="IPR036393">
    <property type="entry name" value="AceGlu_kinase-like_sf"/>
</dbReference>
<dbReference type="InterPro" id="IPR004662">
    <property type="entry name" value="AcgluKinase_fam"/>
</dbReference>
<dbReference type="InterPro" id="IPR037528">
    <property type="entry name" value="ArgB"/>
</dbReference>
<dbReference type="InterPro" id="IPR001048">
    <property type="entry name" value="Asp/Glu/Uridylate_kinase"/>
</dbReference>
<dbReference type="NCBIfam" id="TIGR00761">
    <property type="entry name" value="argB"/>
    <property type="match status" value="1"/>
</dbReference>
<dbReference type="PANTHER" id="PTHR23342">
    <property type="entry name" value="N-ACETYLGLUTAMATE SYNTHASE"/>
    <property type="match status" value="1"/>
</dbReference>
<dbReference type="PANTHER" id="PTHR23342:SF0">
    <property type="entry name" value="N-ACETYLGLUTAMATE SYNTHASE, MITOCHONDRIAL"/>
    <property type="match status" value="1"/>
</dbReference>
<dbReference type="Pfam" id="PF00696">
    <property type="entry name" value="AA_kinase"/>
    <property type="match status" value="1"/>
</dbReference>
<dbReference type="PIRSF" id="PIRSF000728">
    <property type="entry name" value="NAGK"/>
    <property type="match status" value="1"/>
</dbReference>
<dbReference type="SUPFAM" id="SSF53633">
    <property type="entry name" value="Carbamate kinase-like"/>
    <property type="match status" value="1"/>
</dbReference>
<gene>
    <name evidence="1" type="primary">argB</name>
    <name type="ordered locus">SO_0276</name>
</gene>
<protein>
    <recommendedName>
        <fullName evidence="1">Acetylglutamate kinase</fullName>
        <ecNumber evidence="1">2.7.2.8</ecNumber>
    </recommendedName>
    <alternativeName>
        <fullName evidence="1">N-acetyl-L-glutamate 5-phosphotransferase</fullName>
    </alternativeName>
    <alternativeName>
        <fullName evidence="1">NAG kinase</fullName>
        <shortName evidence="1">NAGK</shortName>
    </alternativeName>
</protein>
<keyword id="KW-0028">Amino-acid biosynthesis</keyword>
<keyword id="KW-0055">Arginine biosynthesis</keyword>
<keyword id="KW-0067">ATP-binding</keyword>
<keyword id="KW-0963">Cytoplasm</keyword>
<keyword id="KW-0418">Kinase</keyword>
<keyword id="KW-0547">Nucleotide-binding</keyword>
<keyword id="KW-1185">Reference proteome</keyword>
<keyword id="KW-0808">Transferase</keyword>
<name>ARGB_SHEON</name>